<organism>
    <name type="scientific">Salmonella typhi</name>
    <dbReference type="NCBI Taxonomy" id="90370"/>
    <lineage>
        <taxon>Bacteria</taxon>
        <taxon>Pseudomonadati</taxon>
        <taxon>Pseudomonadota</taxon>
        <taxon>Gammaproteobacteria</taxon>
        <taxon>Enterobacterales</taxon>
        <taxon>Enterobacteriaceae</taxon>
        <taxon>Salmonella</taxon>
    </lineage>
</organism>
<name>CYSH_SALTI</name>
<reference key="1">
    <citation type="journal article" date="2001" name="Nature">
        <title>Complete genome sequence of a multiple drug resistant Salmonella enterica serovar Typhi CT18.</title>
        <authorList>
            <person name="Parkhill J."/>
            <person name="Dougan G."/>
            <person name="James K.D."/>
            <person name="Thomson N.R."/>
            <person name="Pickard D."/>
            <person name="Wain J."/>
            <person name="Churcher C.M."/>
            <person name="Mungall K.L."/>
            <person name="Bentley S.D."/>
            <person name="Holden M.T.G."/>
            <person name="Sebaihia M."/>
            <person name="Baker S."/>
            <person name="Basham D."/>
            <person name="Brooks K."/>
            <person name="Chillingworth T."/>
            <person name="Connerton P."/>
            <person name="Cronin A."/>
            <person name="Davis P."/>
            <person name="Davies R.M."/>
            <person name="Dowd L."/>
            <person name="White N."/>
            <person name="Farrar J."/>
            <person name="Feltwell T."/>
            <person name="Hamlin N."/>
            <person name="Haque A."/>
            <person name="Hien T.T."/>
            <person name="Holroyd S."/>
            <person name="Jagels K."/>
            <person name="Krogh A."/>
            <person name="Larsen T.S."/>
            <person name="Leather S."/>
            <person name="Moule S."/>
            <person name="O'Gaora P."/>
            <person name="Parry C."/>
            <person name="Quail M.A."/>
            <person name="Rutherford K.M."/>
            <person name="Simmonds M."/>
            <person name="Skelton J."/>
            <person name="Stevens K."/>
            <person name="Whitehead S."/>
            <person name="Barrell B.G."/>
        </authorList>
    </citation>
    <scope>NUCLEOTIDE SEQUENCE [LARGE SCALE GENOMIC DNA]</scope>
    <source>
        <strain>CT18</strain>
    </source>
</reference>
<reference key="2">
    <citation type="journal article" date="2003" name="J. Bacteriol.">
        <title>Comparative genomics of Salmonella enterica serovar Typhi strains Ty2 and CT18.</title>
        <authorList>
            <person name="Deng W."/>
            <person name="Liou S.-R."/>
            <person name="Plunkett G. III"/>
            <person name="Mayhew G.F."/>
            <person name="Rose D.J."/>
            <person name="Burland V."/>
            <person name="Kodoyianni V."/>
            <person name="Schwartz D.C."/>
            <person name="Blattner F.R."/>
        </authorList>
    </citation>
    <scope>NUCLEOTIDE SEQUENCE [LARGE SCALE GENOMIC DNA]</scope>
    <source>
        <strain>ATCC 700931 / Ty2</strain>
    </source>
</reference>
<evidence type="ECO:0000250" key="1"/>
<evidence type="ECO:0000255" key="2">
    <source>
        <dbReference type="HAMAP-Rule" id="MF_00063"/>
    </source>
</evidence>
<dbReference type="EC" id="1.8.4.8" evidence="2"/>
<dbReference type="EMBL" id="AL513382">
    <property type="protein sequence ID" value="CAD06052.1"/>
    <property type="molecule type" value="Genomic_DNA"/>
</dbReference>
<dbReference type="EMBL" id="AE014613">
    <property type="protein sequence ID" value="AAO70404.1"/>
    <property type="molecule type" value="Genomic_DNA"/>
</dbReference>
<dbReference type="RefSeq" id="NP_457335.1">
    <property type="nucleotide sequence ID" value="NC_003198.1"/>
</dbReference>
<dbReference type="RefSeq" id="WP_000080392.1">
    <property type="nucleotide sequence ID" value="NZ_WSUR01000005.1"/>
</dbReference>
<dbReference type="SMR" id="Q8Z460"/>
<dbReference type="STRING" id="220341.gene:17586962"/>
<dbReference type="KEGG" id="stt:t2847"/>
<dbReference type="KEGG" id="sty:STY3074"/>
<dbReference type="PATRIC" id="fig|220341.7.peg.3127"/>
<dbReference type="eggNOG" id="COG0175">
    <property type="taxonomic scope" value="Bacteria"/>
</dbReference>
<dbReference type="HOGENOM" id="CLU_044089_3_0_6"/>
<dbReference type="OMA" id="PIARWTQ"/>
<dbReference type="OrthoDB" id="9794018at2"/>
<dbReference type="UniPathway" id="UPA00140">
    <property type="reaction ID" value="UER00206"/>
</dbReference>
<dbReference type="Proteomes" id="UP000000541">
    <property type="component" value="Chromosome"/>
</dbReference>
<dbReference type="Proteomes" id="UP000002670">
    <property type="component" value="Chromosome"/>
</dbReference>
<dbReference type="GO" id="GO:0005737">
    <property type="term" value="C:cytoplasm"/>
    <property type="evidence" value="ECO:0007669"/>
    <property type="project" value="UniProtKB-SubCell"/>
</dbReference>
<dbReference type="GO" id="GO:0004604">
    <property type="term" value="F:phosphoadenylyl-sulfate reductase (thioredoxin) activity"/>
    <property type="evidence" value="ECO:0007669"/>
    <property type="project" value="UniProtKB-UniRule"/>
</dbReference>
<dbReference type="GO" id="GO:0070814">
    <property type="term" value="P:hydrogen sulfide biosynthetic process"/>
    <property type="evidence" value="ECO:0007669"/>
    <property type="project" value="UniProtKB-UniRule"/>
</dbReference>
<dbReference type="GO" id="GO:0019379">
    <property type="term" value="P:sulfate assimilation, phosphoadenylyl sulfate reduction by phosphoadenylyl-sulfate reductase (thioredoxin)"/>
    <property type="evidence" value="ECO:0007669"/>
    <property type="project" value="UniProtKB-UniRule"/>
</dbReference>
<dbReference type="CDD" id="cd23945">
    <property type="entry name" value="PAPS_reductase"/>
    <property type="match status" value="1"/>
</dbReference>
<dbReference type="FunFam" id="3.40.50.620:FF:000043">
    <property type="entry name" value="Phosphoadenosine phosphosulfate reductase"/>
    <property type="match status" value="1"/>
</dbReference>
<dbReference type="Gene3D" id="3.40.50.620">
    <property type="entry name" value="HUPs"/>
    <property type="match status" value="1"/>
</dbReference>
<dbReference type="HAMAP" id="MF_00063">
    <property type="entry name" value="CysH"/>
    <property type="match status" value="1"/>
</dbReference>
<dbReference type="InterPro" id="IPR004511">
    <property type="entry name" value="PAPS/APS_Rdtase"/>
</dbReference>
<dbReference type="InterPro" id="IPR002500">
    <property type="entry name" value="PAPS_reduct_dom"/>
</dbReference>
<dbReference type="InterPro" id="IPR011800">
    <property type="entry name" value="PAPS_reductase_CysH"/>
</dbReference>
<dbReference type="InterPro" id="IPR014729">
    <property type="entry name" value="Rossmann-like_a/b/a_fold"/>
</dbReference>
<dbReference type="NCBIfam" id="TIGR00434">
    <property type="entry name" value="cysH"/>
    <property type="match status" value="1"/>
</dbReference>
<dbReference type="NCBIfam" id="TIGR02057">
    <property type="entry name" value="PAPS_reductase"/>
    <property type="match status" value="1"/>
</dbReference>
<dbReference type="NCBIfam" id="NF002537">
    <property type="entry name" value="PRK02090.1"/>
    <property type="match status" value="1"/>
</dbReference>
<dbReference type="PANTHER" id="PTHR46509">
    <property type="entry name" value="PHOSPHOADENOSINE PHOSPHOSULFATE REDUCTASE"/>
    <property type="match status" value="1"/>
</dbReference>
<dbReference type="PANTHER" id="PTHR46509:SF1">
    <property type="entry name" value="PHOSPHOADENOSINE PHOSPHOSULFATE REDUCTASE"/>
    <property type="match status" value="1"/>
</dbReference>
<dbReference type="Pfam" id="PF01507">
    <property type="entry name" value="PAPS_reduct"/>
    <property type="match status" value="1"/>
</dbReference>
<dbReference type="PIRSF" id="PIRSF000857">
    <property type="entry name" value="PAPS_reductase"/>
    <property type="match status" value="1"/>
</dbReference>
<dbReference type="SUPFAM" id="SSF52402">
    <property type="entry name" value="Adenine nucleotide alpha hydrolases-like"/>
    <property type="match status" value="1"/>
</dbReference>
<gene>
    <name evidence="2" type="primary">cysH</name>
    <name type="ordered locus">STY3074</name>
    <name type="ordered locus">t2847</name>
</gene>
<keyword id="KW-0963">Cytoplasm</keyword>
<keyword id="KW-0560">Oxidoreductase</keyword>
<proteinExistence type="inferred from homology"/>
<feature type="initiator methionine" description="Removed" evidence="1">
    <location>
        <position position="1"/>
    </location>
</feature>
<feature type="chain" id="PRO_0000100642" description="Phosphoadenosine 5'-phosphosulfate reductase">
    <location>
        <begin position="2"/>
        <end position="244"/>
    </location>
</feature>
<feature type="active site" description="Nucleophile; cysteine thiosulfonate intermediate" evidence="2">
    <location>
        <position position="239"/>
    </location>
</feature>
<protein>
    <recommendedName>
        <fullName evidence="2">Phosphoadenosine 5'-phosphosulfate reductase</fullName>
        <shortName evidence="2">PAPS reductase</shortName>
        <ecNumber evidence="2">1.8.4.8</ecNumber>
    </recommendedName>
    <alternativeName>
        <fullName evidence="2">3'-phosphoadenylylsulfate reductase</fullName>
    </alternativeName>
    <alternativeName>
        <fullName evidence="2">PAPS reductase, thioredoxin dependent</fullName>
    </alternativeName>
    <alternativeName>
        <fullName evidence="2">PAPS sulfotransferase</fullName>
    </alternativeName>
    <alternativeName>
        <fullName evidence="2">PAdoPS reductase</fullName>
    </alternativeName>
</protein>
<sequence>MSQLDLNALNELPKVDRVLALAETNAQLETLTAEERVAWALENLPGEYVLSSSFGIQAAVSLHLVNQIRPDIPVILTDTGYLFPETYQFIDELTDKLKLNLKVYRAGESPAWQEARYGKLWEQGVEGIEKYNEINKVEPMNRALKELNAQTWFAGLRREQSGSRAHLPVLAIQRGVFKVLPIIDWDNRTVYQYLQKHGLKYHPLWAQGYLSVGDTHTTRKWEPGMAEEETRFFGLKRECGLHEG</sequence>
<accession>Q8Z460</accession>
<comment type="function">
    <text evidence="2">Catalyzes the formation of sulfite from phosphoadenosine 5'-phosphosulfate (PAPS) using thioredoxin as an electron donor.</text>
</comment>
<comment type="catalytic activity">
    <reaction evidence="2">
        <text>[thioredoxin]-disulfide + sulfite + adenosine 3',5'-bisphosphate + 2 H(+) = [thioredoxin]-dithiol + 3'-phosphoadenylyl sulfate</text>
        <dbReference type="Rhea" id="RHEA:11724"/>
        <dbReference type="Rhea" id="RHEA-COMP:10698"/>
        <dbReference type="Rhea" id="RHEA-COMP:10700"/>
        <dbReference type="ChEBI" id="CHEBI:15378"/>
        <dbReference type="ChEBI" id="CHEBI:17359"/>
        <dbReference type="ChEBI" id="CHEBI:29950"/>
        <dbReference type="ChEBI" id="CHEBI:50058"/>
        <dbReference type="ChEBI" id="CHEBI:58339"/>
        <dbReference type="ChEBI" id="CHEBI:58343"/>
        <dbReference type="EC" id="1.8.4.8"/>
    </reaction>
</comment>
<comment type="pathway">
    <text evidence="2">Sulfur metabolism; hydrogen sulfide biosynthesis; sulfite from sulfate: step 3/3.</text>
</comment>
<comment type="subcellular location">
    <subcellularLocation>
        <location evidence="2">Cytoplasm</location>
    </subcellularLocation>
</comment>
<comment type="similarity">
    <text evidence="2">Belongs to the PAPS reductase family. CysH subfamily.</text>
</comment>